<organism>
    <name type="scientific">Orientia tsutsugamushi (strain Ikeda)</name>
    <name type="common">Rickettsia tsutsugamushi</name>
    <dbReference type="NCBI Taxonomy" id="334380"/>
    <lineage>
        <taxon>Bacteria</taxon>
        <taxon>Pseudomonadati</taxon>
        <taxon>Pseudomonadota</taxon>
        <taxon>Alphaproteobacteria</taxon>
        <taxon>Rickettsiales</taxon>
        <taxon>Rickettsiaceae</taxon>
        <taxon>Rickettsieae</taxon>
        <taxon>Orientia</taxon>
    </lineage>
</organism>
<gene>
    <name evidence="1" type="primary">gatA</name>
    <name type="ordered locus">OTT_0367</name>
</gene>
<keyword id="KW-0067">ATP-binding</keyword>
<keyword id="KW-0436">Ligase</keyword>
<keyword id="KW-0547">Nucleotide-binding</keyword>
<keyword id="KW-0648">Protein biosynthesis</keyword>
<sequence>MNNLVKLTISQAISGLKNKEFTATDLVTAHINQMDKYRCINAYITEIPELALQAAKKSDFLIQTNQARPIEGIPVSIKDLFCTKGILTTAASKMLQNFTPVYDATVYSKIINAGGIMLGKGNMDEFAMGSANINSYFGNVINPWKAENDDIDLTPGGSSGGSSAAVAAFMAMAALGSDTGGSVRQPASYTGTVGIKPSYGRCSRWGMIAFSCSLDQAGIITRTVEDAAIMLETMMGYDEKDSTSLNVEVPNLRSAVNQPIKGMKIGIPYDLMENKSLSSEIITMWQNTINLLKDHGVEIVSISLPYINYALPVYYVLSSAEASSNLARYDGVRYGLRVEGKNSNINEIYELSRSEGFGAEVKRRIMMGTYALASTNINSYYIKAQQVRRLIVNDFTNSFNKVDCILIPSAPTAAFPLNSNQDDPVTMYLNDILTIPASLAGLPCISIPAGFSANKLPLGMQVIGSRLDEYNIIKISSAIEKALNLKFIPKGF</sequence>
<proteinExistence type="inferred from homology"/>
<feature type="chain" id="PRO_1000095157" description="Glutamyl-tRNA(Gln) amidotransferase subunit A">
    <location>
        <begin position="1"/>
        <end position="492"/>
    </location>
</feature>
<feature type="active site" description="Charge relay system" evidence="1">
    <location>
        <position position="78"/>
    </location>
</feature>
<feature type="active site" description="Charge relay system" evidence="1">
    <location>
        <position position="158"/>
    </location>
</feature>
<feature type="active site" description="Acyl-ester intermediate" evidence="1">
    <location>
        <position position="182"/>
    </location>
</feature>
<protein>
    <recommendedName>
        <fullName evidence="1">Glutamyl-tRNA(Gln) amidotransferase subunit A</fullName>
        <shortName evidence="1">Glu-ADT subunit A</shortName>
        <ecNumber evidence="1">6.3.5.7</ecNumber>
    </recommendedName>
</protein>
<reference key="1">
    <citation type="journal article" date="2008" name="DNA Res.">
        <title>The whole-genome sequencing of the obligate intracellular bacterium Orientia tsutsugamushi revealed massive gene amplification during reductive genome evolution.</title>
        <authorList>
            <person name="Nakayama K."/>
            <person name="Yamashita A."/>
            <person name="Kurokawa K."/>
            <person name="Morimoto T."/>
            <person name="Ogawa M."/>
            <person name="Fukuhara M."/>
            <person name="Urakami H."/>
            <person name="Ohnishi M."/>
            <person name="Uchiyama I."/>
            <person name="Ogura Y."/>
            <person name="Ooka T."/>
            <person name="Oshima K."/>
            <person name="Tamura A."/>
            <person name="Hattori M."/>
            <person name="Hayashi T."/>
        </authorList>
    </citation>
    <scope>NUCLEOTIDE SEQUENCE [LARGE SCALE GENOMIC DNA]</scope>
    <source>
        <strain>Ikeda</strain>
    </source>
</reference>
<accession>B3CQQ9</accession>
<evidence type="ECO:0000255" key="1">
    <source>
        <dbReference type="HAMAP-Rule" id="MF_00120"/>
    </source>
</evidence>
<comment type="function">
    <text evidence="1">Allows the formation of correctly charged Gln-tRNA(Gln) through the transamidation of misacylated Glu-tRNA(Gln) in organisms which lack glutaminyl-tRNA synthetase. The reaction takes place in the presence of glutamine and ATP through an activated gamma-phospho-Glu-tRNA(Gln).</text>
</comment>
<comment type="catalytic activity">
    <reaction evidence="1">
        <text>L-glutamyl-tRNA(Gln) + L-glutamine + ATP + H2O = L-glutaminyl-tRNA(Gln) + L-glutamate + ADP + phosphate + H(+)</text>
        <dbReference type="Rhea" id="RHEA:17521"/>
        <dbReference type="Rhea" id="RHEA-COMP:9681"/>
        <dbReference type="Rhea" id="RHEA-COMP:9684"/>
        <dbReference type="ChEBI" id="CHEBI:15377"/>
        <dbReference type="ChEBI" id="CHEBI:15378"/>
        <dbReference type="ChEBI" id="CHEBI:29985"/>
        <dbReference type="ChEBI" id="CHEBI:30616"/>
        <dbReference type="ChEBI" id="CHEBI:43474"/>
        <dbReference type="ChEBI" id="CHEBI:58359"/>
        <dbReference type="ChEBI" id="CHEBI:78520"/>
        <dbReference type="ChEBI" id="CHEBI:78521"/>
        <dbReference type="ChEBI" id="CHEBI:456216"/>
        <dbReference type="EC" id="6.3.5.7"/>
    </reaction>
</comment>
<comment type="subunit">
    <text evidence="1">Heterotrimer of A, B and C subunits.</text>
</comment>
<comment type="similarity">
    <text evidence="1">Belongs to the amidase family. GatA subfamily.</text>
</comment>
<name>GATA_ORITI</name>
<dbReference type="EC" id="6.3.5.7" evidence="1"/>
<dbReference type="EMBL" id="AP008981">
    <property type="protein sequence ID" value="BAG39825.1"/>
    <property type="molecule type" value="Genomic_DNA"/>
</dbReference>
<dbReference type="RefSeq" id="WP_012461052.1">
    <property type="nucleotide sequence ID" value="NC_010793.1"/>
</dbReference>
<dbReference type="SMR" id="B3CQQ9"/>
<dbReference type="KEGG" id="ott:OTT_0367"/>
<dbReference type="HOGENOM" id="CLU_009600_0_3_5"/>
<dbReference type="OrthoDB" id="9811471at2"/>
<dbReference type="Proteomes" id="UP000001033">
    <property type="component" value="Chromosome"/>
</dbReference>
<dbReference type="GO" id="GO:0030956">
    <property type="term" value="C:glutamyl-tRNA(Gln) amidotransferase complex"/>
    <property type="evidence" value="ECO:0007669"/>
    <property type="project" value="InterPro"/>
</dbReference>
<dbReference type="GO" id="GO:0005524">
    <property type="term" value="F:ATP binding"/>
    <property type="evidence" value="ECO:0007669"/>
    <property type="project" value="UniProtKB-KW"/>
</dbReference>
<dbReference type="GO" id="GO:0050567">
    <property type="term" value="F:glutaminyl-tRNA synthase (glutamine-hydrolyzing) activity"/>
    <property type="evidence" value="ECO:0007669"/>
    <property type="project" value="UniProtKB-UniRule"/>
</dbReference>
<dbReference type="GO" id="GO:0006412">
    <property type="term" value="P:translation"/>
    <property type="evidence" value="ECO:0007669"/>
    <property type="project" value="UniProtKB-UniRule"/>
</dbReference>
<dbReference type="Gene3D" id="3.90.1300.10">
    <property type="entry name" value="Amidase signature (AS) domain"/>
    <property type="match status" value="1"/>
</dbReference>
<dbReference type="HAMAP" id="MF_00120">
    <property type="entry name" value="GatA"/>
    <property type="match status" value="1"/>
</dbReference>
<dbReference type="InterPro" id="IPR000120">
    <property type="entry name" value="Amidase"/>
</dbReference>
<dbReference type="InterPro" id="IPR020556">
    <property type="entry name" value="Amidase_CS"/>
</dbReference>
<dbReference type="InterPro" id="IPR023631">
    <property type="entry name" value="Amidase_dom"/>
</dbReference>
<dbReference type="InterPro" id="IPR036928">
    <property type="entry name" value="AS_sf"/>
</dbReference>
<dbReference type="InterPro" id="IPR004412">
    <property type="entry name" value="GatA"/>
</dbReference>
<dbReference type="NCBIfam" id="TIGR00132">
    <property type="entry name" value="gatA"/>
    <property type="match status" value="1"/>
</dbReference>
<dbReference type="PANTHER" id="PTHR11895:SF151">
    <property type="entry name" value="GLUTAMYL-TRNA(GLN) AMIDOTRANSFERASE SUBUNIT A"/>
    <property type="match status" value="1"/>
</dbReference>
<dbReference type="PANTHER" id="PTHR11895">
    <property type="entry name" value="TRANSAMIDASE"/>
    <property type="match status" value="1"/>
</dbReference>
<dbReference type="Pfam" id="PF01425">
    <property type="entry name" value="Amidase"/>
    <property type="match status" value="1"/>
</dbReference>
<dbReference type="SUPFAM" id="SSF75304">
    <property type="entry name" value="Amidase signature (AS) enzymes"/>
    <property type="match status" value="1"/>
</dbReference>
<dbReference type="PROSITE" id="PS00571">
    <property type="entry name" value="AMIDASES"/>
    <property type="match status" value="1"/>
</dbReference>